<comment type="function">
    <text evidence="1">Catalyzes the last two sequential reactions in the de novo biosynthetic pathway for UDP-N-acetylglucosamine (UDP-GlcNAc). The C-terminal domain catalyzes the transfer of acetyl group from acetyl coenzyme A to glucosamine-1-phosphate (GlcN-1-P) to produce N-acetylglucosamine-1-phosphate (GlcNAc-1-P), which is converted into UDP-GlcNAc by the transfer of uridine 5-monophosphate (from uridine 5-triphosphate), a reaction catalyzed by the N-terminal domain.</text>
</comment>
<comment type="catalytic activity">
    <reaction evidence="1">
        <text>alpha-D-glucosamine 1-phosphate + acetyl-CoA = N-acetyl-alpha-D-glucosamine 1-phosphate + CoA + H(+)</text>
        <dbReference type="Rhea" id="RHEA:13725"/>
        <dbReference type="ChEBI" id="CHEBI:15378"/>
        <dbReference type="ChEBI" id="CHEBI:57287"/>
        <dbReference type="ChEBI" id="CHEBI:57288"/>
        <dbReference type="ChEBI" id="CHEBI:57776"/>
        <dbReference type="ChEBI" id="CHEBI:58516"/>
        <dbReference type="EC" id="2.3.1.157"/>
    </reaction>
</comment>
<comment type="catalytic activity">
    <reaction evidence="1">
        <text>N-acetyl-alpha-D-glucosamine 1-phosphate + UTP + H(+) = UDP-N-acetyl-alpha-D-glucosamine + diphosphate</text>
        <dbReference type="Rhea" id="RHEA:13509"/>
        <dbReference type="ChEBI" id="CHEBI:15378"/>
        <dbReference type="ChEBI" id="CHEBI:33019"/>
        <dbReference type="ChEBI" id="CHEBI:46398"/>
        <dbReference type="ChEBI" id="CHEBI:57705"/>
        <dbReference type="ChEBI" id="CHEBI:57776"/>
        <dbReference type="EC" id="2.7.7.23"/>
    </reaction>
</comment>
<comment type="cofactor">
    <cofactor evidence="1">
        <name>Mg(2+)</name>
        <dbReference type="ChEBI" id="CHEBI:18420"/>
    </cofactor>
    <text evidence="1">Binds 1 Mg(2+) ion per subunit.</text>
</comment>
<comment type="pathway">
    <text evidence="1">Nucleotide-sugar biosynthesis; UDP-N-acetyl-alpha-D-glucosamine biosynthesis; N-acetyl-alpha-D-glucosamine 1-phosphate from alpha-D-glucosamine 6-phosphate (route II): step 2/2.</text>
</comment>
<comment type="pathway">
    <text evidence="1">Nucleotide-sugar biosynthesis; UDP-N-acetyl-alpha-D-glucosamine biosynthesis; UDP-N-acetyl-alpha-D-glucosamine from N-acetyl-alpha-D-glucosamine 1-phosphate: step 1/1.</text>
</comment>
<comment type="pathway">
    <text evidence="1">Bacterial outer membrane biogenesis; LPS lipid A biosynthesis.</text>
</comment>
<comment type="subunit">
    <text evidence="1">Homotrimer.</text>
</comment>
<comment type="subcellular location">
    <subcellularLocation>
        <location evidence="1">Cytoplasm</location>
    </subcellularLocation>
</comment>
<comment type="similarity">
    <text evidence="1">In the N-terminal section; belongs to the N-acetylglucosamine-1-phosphate uridyltransferase family.</text>
</comment>
<comment type="similarity">
    <text evidence="1">In the C-terminal section; belongs to the transferase hexapeptide repeat family.</text>
</comment>
<comment type="sequence caution" evidence="2">
    <conflict type="erroneous initiation">
        <sequence resource="EMBL-CDS" id="ABD25644"/>
    </conflict>
</comment>
<keyword id="KW-0012">Acyltransferase</keyword>
<keyword id="KW-0133">Cell shape</keyword>
<keyword id="KW-0961">Cell wall biogenesis/degradation</keyword>
<keyword id="KW-0963">Cytoplasm</keyword>
<keyword id="KW-0460">Magnesium</keyword>
<keyword id="KW-0479">Metal-binding</keyword>
<keyword id="KW-0511">Multifunctional enzyme</keyword>
<keyword id="KW-0548">Nucleotidyltransferase</keyword>
<keyword id="KW-0573">Peptidoglycan synthesis</keyword>
<keyword id="KW-1185">Reference proteome</keyword>
<keyword id="KW-0677">Repeat</keyword>
<keyword id="KW-0808">Transferase</keyword>
<sequence>MDSPLAIIVLAAGKGTRMKSDLHKVLHPIAGRPMLMHLMASAAELSPARQVVVAGHGREQLEKALGGSADIAVQDPQLGTAHAVQQAQGALSGFEGDVLILYGDVPFVRASTMRAMIERLHGADEPAAVVLGFAPADTLQYGRVIADDGRIVKMVEHKDASEAERACRVCNSGLMAVRSADLFGLLARVGNDNAQGEYYLPDVVNIAIADGRTCAVVVTDDADEVAGINSRGELAEAEGRWQQRRRAAAMADGASLIAPETVWFAWDTVLGRDVTIEPNVFFGPGVTVGDNVTIHAFSHLEGASLAQGVEVGPYARLRPGARLEEKVKVGNFVEVKNAVLHKGAKANHLTYLGDADVGAGANIGAGTITCNYDGYFKHRTVIGERAFIGSNSALIAPVRIGADAIVAAGSAVSRDVADGELRMVRAEQLVKPGWADRFHDAMKKKKAEKKS</sequence>
<accession>Q2G929</accession>
<name>GLMU_NOVAD</name>
<proteinExistence type="inferred from homology"/>
<organism>
    <name type="scientific">Novosphingobium aromaticivorans (strain ATCC 700278 / DSM 12444 / CCUG 56034 / CIP 105152 / NBRC 16084 / F199)</name>
    <dbReference type="NCBI Taxonomy" id="279238"/>
    <lineage>
        <taxon>Bacteria</taxon>
        <taxon>Pseudomonadati</taxon>
        <taxon>Pseudomonadota</taxon>
        <taxon>Alphaproteobacteria</taxon>
        <taxon>Sphingomonadales</taxon>
        <taxon>Sphingomonadaceae</taxon>
        <taxon>Novosphingobium</taxon>
    </lineage>
</organism>
<protein>
    <recommendedName>
        <fullName evidence="1">Bifunctional protein GlmU</fullName>
    </recommendedName>
    <domain>
        <recommendedName>
            <fullName evidence="1">UDP-N-acetylglucosamine pyrophosphorylase</fullName>
            <ecNumber evidence="1">2.7.7.23</ecNumber>
        </recommendedName>
        <alternativeName>
            <fullName evidence="1">N-acetylglucosamine-1-phosphate uridyltransferase</fullName>
        </alternativeName>
    </domain>
    <domain>
        <recommendedName>
            <fullName evidence="1">Glucosamine-1-phosphate N-acetyltransferase</fullName>
            <ecNumber evidence="1">2.3.1.157</ecNumber>
        </recommendedName>
    </domain>
</protein>
<evidence type="ECO:0000255" key="1">
    <source>
        <dbReference type="HAMAP-Rule" id="MF_01631"/>
    </source>
</evidence>
<evidence type="ECO:0000305" key="2"/>
<gene>
    <name evidence="1" type="primary">glmU</name>
    <name type="ordered locus">Saro_1199</name>
</gene>
<reference key="1">
    <citation type="submission" date="2006-01" db="EMBL/GenBank/DDBJ databases">
        <title>Complete sequence of Novosphingobium aromaticivorans DSM 12444.</title>
        <authorList>
            <consortium name="US DOE Joint Genome Institute"/>
            <person name="Copeland A."/>
            <person name="Lucas S."/>
            <person name="Lapidus A."/>
            <person name="Barry K."/>
            <person name="Detter J.C."/>
            <person name="Glavina T."/>
            <person name="Hammon N."/>
            <person name="Israni S."/>
            <person name="Pitluck S."/>
            <person name="Chain P."/>
            <person name="Malfatti S."/>
            <person name="Shin M."/>
            <person name="Vergez L."/>
            <person name="Schmutz J."/>
            <person name="Larimer F."/>
            <person name="Land M."/>
            <person name="Kyrpides N."/>
            <person name="Ivanova N."/>
            <person name="Fredrickson J."/>
            <person name="Balkwill D."/>
            <person name="Romine M.F."/>
            <person name="Richardson P."/>
        </authorList>
    </citation>
    <scope>NUCLEOTIDE SEQUENCE [LARGE SCALE GENOMIC DNA]</scope>
    <source>
        <strain>ATCC 700278 / DSM 12444 / CCUG 56034 / CIP 105152 / NBRC 16084 / F199</strain>
    </source>
</reference>
<dbReference type="EC" id="2.7.7.23" evidence="1"/>
<dbReference type="EC" id="2.3.1.157" evidence="1"/>
<dbReference type="EMBL" id="CP000248">
    <property type="protein sequence ID" value="ABD25644.1"/>
    <property type="status" value="ALT_INIT"/>
    <property type="molecule type" value="Genomic_DNA"/>
</dbReference>
<dbReference type="RefSeq" id="WP_011444858.1">
    <property type="nucleotide sequence ID" value="NC_007794.1"/>
</dbReference>
<dbReference type="SMR" id="Q2G929"/>
<dbReference type="STRING" id="279238.Saro_1199"/>
<dbReference type="KEGG" id="nar:Saro_1199"/>
<dbReference type="eggNOG" id="COG1207">
    <property type="taxonomic scope" value="Bacteria"/>
</dbReference>
<dbReference type="HOGENOM" id="CLU_029499_15_2_5"/>
<dbReference type="UniPathway" id="UPA00113">
    <property type="reaction ID" value="UER00532"/>
</dbReference>
<dbReference type="UniPathway" id="UPA00113">
    <property type="reaction ID" value="UER00533"/>
</dbReference>
<dbReference type="UniPathway" id="UPA00973"/>
<dbReference type="Proteomes" id="UP000009134">
    <property type="component" value="Chromosome"/>
</dbReference>
<dbReference type="GO" id="GO:0005737">
    <property type="term" value="C:cytoplasm"/>
    <property type="evidence" value="ECO:0007669"/>
    <property type="project" value="UniProtKB-SubCell"/>
</dbReference>
<dbReference type="GO" id="GO:0016020">
    <property type="term" value="C:membrane"/>
    <property type="evidence" value="ECO:0007669"/>
    <property type="project" value="GOC"/>
</dbReference>
<dbReference type="GO" id="GO:0019134">
    <property type="term" value="F:glucosamine-1-phosphate N-acetyltransferase activity"/>
    <property type="evidence" value="ECO:0007669"/>
    <property type="project" value="UniProtKB-UniRule"/>
</dbReference>
<dbReference type="GO" id="GO:0000287">
    <property type="term" value="F:magnesium ion binding"/>
    <property type="evidence" value="ECO:0007669"/>
    <property type="project" value="UniProtKB-UniRule"/>
</dbReference>
<dbReference type="GO" id="GO:0003977">
    <property type="term" value="F:UDP-N-acetylglucosamine diphosphorylase activity"/>
    <property type="evidence" value="ECO:0007669"/>
    <property type="project" value="UniProtKB-UniRule"/>
</dbReference>
<dbReference type="GO" id="GO:0000902">
    <property type="term" value="P:cell morphogenesis"/>
    <property type="evidence" value="ECO:0007669"/>
    <property type="project" value="UniProtKB-UniRule"/>
</dbReference>
<dbReference type="GO" id="GO:0071555">
    <property type="term" value="P:cell wall organization"/>
    <property type="evidence" value="ECO:0007669"/>
    <property type="project" value="UniProtKB-KW"/>
</dbReference>
<dbReference type="GO" id="GO:0009245">
    <property type="term" value="P:lipid A biosynthetic process"/>
    <property type="evidence" value="ECO:0007669"/>
    <property type="project" value="UniProtKB-UniRule"/>
</dbReference>
<dbReference type="GO" id="GO:0009252">
    <property type="term" value="P:peptidoglycan biosynthetic process"/>
    <property type="evidence" value="ECO:0007669"/>
    <property type="project" value="UniProtKB-UniRule"/>
</dbReference>
<dbReference type="GO" id="GO:0008360">
    <property type="term" value="P:regulation of cell shape"/>
    <property type="evidence" value="ECO:0007669"/>
    <property type="project" value="UniProtKB-KW"/>
</dbReference>
<dbReference type="GO" id="GO:0006048">
    <property type="term" value="P:UDP-N-acetylglucosamine biosynthetic process"/>
    <property type="evidence" value="ECO:0007669"/>
    <property type="project" value="UniProtKB-UniPathway"/>
</dbReference>
<dbReference type="CDD" id="cd02540">
    <property type="entry name" value="GT2_GlmU_N_bac"/>
    <property type="match status" value="1"/>
</dbReference>
<dbReference type="CDD" id="cd03353">
    <property type="entry name" value="LbH_GlmU_C"/>
    <property type="match status" value="1"/>
</dbReference>
<dbReference type="Gene3D" id="2.160.10.10">
    <property type="entry name" value="Hexapeptide repeat proteins"/>
    <property type="match status" value="1"/>
</dbReference>
<dbReference type="Gene3D" id="3.90.550.10">
    <property type="entry name" value="Spore Coat Polysaccharide Biosynthesis Protein SpsA, Chain A"/>
    <property type="match status" value="1"/>
</dbReference>
<dbReference type="HAMAP" id="MF_01631">
    <property type="entry name" value="GlmU"/>
    <property type="match status" value="1"/>
</dbReference>
<dbReference type="InterPro" id="IPR005882">
    <property type="entry name" value="Bifunctional_GlmU"/>
</dbReference>
<dbReference type="InterPro" id="IPR050065">
    <property type="entry name" value="GlmU-like"/>
</dbReference>
<dbReference type="InterPro" id="IPR038009">
    <property type="entry name" value="GlmU_C_LbH"/>
</dbReference>
<dbReference type="InterPro" id="IPR001451">
    <property type="entry name" value="Hexapep"/>
</dbReference>
<dbReference type="InterPro" id="IPR018357">
    <property type="entry name" value="Hexapep_transf_CS"/>
</dbReference>
<dbReference type="InterPro" id="IPR025877">
    <property type="entry name" value="MobA-like_NTP_Trfase"/>
</dbReference>
<dbReference type="InterPro" id="IPR029044">
    <property type="entry name" value="Nucleotide-diphossugar_trans"/>
</dbReference>
<dbReference type="InterPro" id="IPR011004">
    <property type="entry name" value="Trimer_LpxA-like_sf"/>
</dbReference>
<dbReference type="NCBIfam" id="TIGR01173">
    <property type="entry name" value="glmU"/>
    <property type="match status" value="1"/>
</dbReference>
<dbReference type="NCBIfam" id="NF010933">
    <property type="entry name" value="PRK14353.1"/>
    <property type="match status" value="1"/>
</dbReference>
<dbReference type="PANTHER" id="PTHR43584:SF3">
    <property type="entry name" value="BIFUNCTIONAL PROTEIN GLMU"/>
    <property type="match status" value="1"/>
</dbReference>
<dbReference type="PANTHER" id="PTHR43584">
    <property type="entry name" value="NUCLEOTIDYL TRANSFERASE"/>
    <property type="match status" value="1"/>
</dbReference>
<dbReference type="Pfam" id="PF00132">
    <property type="entry name" value="Hexapep"/>
    <property type="match status" value="2"/>
</dbReference>
<dbReference type="Pfam" id="PF12804">
    <property type="entry name" value="NTP_transf_3"/>
    <property type="match status" value="1"/>
</dbReference>
<dbReference type="SUPFAM" id="SSF53448">
    <property type="entry name" value="Nucleotide-diphospho-sugar transferases"/>
    <property type="match status" value="1"/>
</dbReference>
<dbReference type="SUPFAM" id="SSF51161">
    <property type="entry name" value="Trimeric LpxA-like enzymes"/>
    <property type="match status" value="1"/>
</dbReference>
<dbReference type="PROSITE" id="PS00101">
    <property type="entry name" value="HEXAPEP_TRANSFERASES"/>
    <property type="match status" value="2"/>
</dbReference>
<feature type="chain" id="PRO_0000244300" description="Bifunctional protein GlmU">
    <location>
        <begin position="1"/>
        <end position="451"/>
    </location>
</feature>
<feature type="region of interest" description="Pyrophosphorylase" evidence="1">
    <location>
        <begin position="1"/>
        <end position="231"/>
    </location>
</feature>
<feature type="region of interest" description="Linker" evidence="1">
    <location>
        <begin position="232"/>
        <end position="252"/>
    </location>
</feature>
<feature type="region of interest" description="N-acetyltransferase" evidence="1">
    <location>
        <begin position="253"/>
        <end position="451"/>
    </location>
</feature>
<feature type="active site" description="Proton acceptor" evidence="1">
    <location>
        <position position="348"/>
    </location>
</feature>
<feature type="binding site" evidence="1">
    <location>
        <begin position="10"/>
        <end position="13"/>
    </location>
    <ligand>
        <name>UDP-N-acetyl-alpha-D-glucosamine</name>
        <dbReference type="ChEBI" id="CHEBI:57705"/>
    </ligand>
</feature>
<feature type="binding site" evidence="1">
    <location>
        <position position="24"/>
    </location>
    <ligand>
        <name>UDP-N-acetyl-alpha-D-glucosamine</name>
        <dbReference type="ChEBI" id="CHEBI:57705"/>
    </ligand>
</feature>
<feature type="binding site" evidence="1">
    <location>
        <position position="74"/>
    </location>
    <ligand>
        <name>UDP-N-acetyl-alpha-D-glucosamine</name>
        <dbReference type="ChEBI" id="CHEBI:57705"/>
    </ligand>
</feature>
<feature type="binding site" evidence="1">
    <location>
        <begin position="79"/>
        <end position="80"/>
    </location>
    <ligand>
        <name>UDP-N-acetyl-alpha-D-glucosamine</name>
        <dbReference type="ChEBI" id="CHEBI:57705"/>
    </ligand>
</feature>
<feature type="binding site" evidence="1">
    <location>
        <begin position="102"/>
        <end position="104"/>
    </location>
    <ligand>
        <name>UDP-N-acetyl-alpha-D-glucosamine</name>
        <dbReference type="ChEBI" id="CHEBI:57705"/>
    </ligand>
</feature>
<feature type="binding site" evidence="1">
    <location>
        <position position="104"/>
    </location>
    <ligand>
        <name>Mg(2+)</name>
        <dbReference type="ChEBI" id="CHEBI:18420"/>
    </ligand>
</feature>
<feature type="binding site" evidence="1">
    <location>
        <position position="142"/>
    </location>
    <ligand>
        <name>UDP-N-acetyl-alpha-D-glucosamine</name>
        <dbReference type="ChEBI" id="CHEBI:57705"/>
    </ligand>
</feature>
<feature type="binding site" evidence="1">
    <location>
        <position position="156"/>
    </location>
    <ligand>
        <name>UDP-N-acetyl-alpha-D-glucosamine</name>
        <dbReference type="ChEBI" id="CHEBI:57705"/>
    </ligand>
</feature>
<feature type="binding site" evidence="1">
    <location>
        <position position="171"/>
    </location>
    <ligand>
        <name>UDP-N-acetyl-alpha-D-glucosamine</name>
        <dbReference type="ChEBI" id="CHEBI:57705"/>
    </ligand>
</feature>
<feature type="binding site" evidence="1">
    <location>
        <position position="229"/>
    </location>
    <ligand>
        <name>Mg(2+)</name>
        <dbReference type="ChEBI" id="CHEBI:18420"/>
    </ligand>
</feature>
<feature type="binding site" evidence="1">
    <location>
        <position position="229"/>
    </location>
    <ligand>
        <name>UDP-N-acetyl-alpha-D-glucosamine</name>
        <dbReference type="ChEBI" id="CHEBI:57705"/>
    </ligand>
</feature>
<feature type="binding site" evidence="1">
    <location>
        <position position="318"/>
    </location>
    <ligand>
        <name>UDP-N-acetyl-alpha-D-glucosamine</name>
        <dbReference type="ChEBI" id="CHEBI:57705"/>
    </ligand>
</feature>
<feature type="binding site" evidence="1">
    <location>
        <position position="336"/>
    </location>
    <ligand>
        <name>UDP-N-acetyl-alpha-D-glucosamine</name>
        <dbReference type="ChEBI" id="CHEBI:57705"/>
    </ligand>
</feature>
<feature type="binding site" evidence="1">
    <location>
        <position position="351"/>
    </location>
    <ligand>
        <name>UDP-N-acetyl-alpha-D-glucosamine</name>
        <dbReference type="ChEBI" id="CHEBI:57705"/>
    </ligand>
</feature>
<feature type="binding site" evidence="1">
    <location>
        <position position="362"/>
    </location>
    <ligand>
        <name>UDP-N-acetyl-alpha-D-glucosamine</name>
        <dbReference type="ChEBI" id="CHEBI:57705"/>
    </ligand>
</feature>
<feature type="binding site" evidence="1">
    <location>
        <position position="365"/>
    </location>
    <ligand>
        <name>acetyl-CoA</name>
        <dbReference type="ChEBI" id="CHEBI:57288"/>
    </ligand>
</feature>
<feature type="binding site" evidence="1">
    <location>
        <begin position="371"/>
        <end position="372"/>
    </location>
    <ligand>
        <name>acetyl-CoA</name>
        <dbReference type="ChEBI" id="CHEBI:57288"/>
    </ligand>
</feature>
<feature type="binding site" evidence="1">
    <location>
        <position position="390"/>
    </location>
    <ligand>
        <name>acetyl-CoA</name>
        <dbReference type="ChEBI" id="CHEBI:57288"/>
    </ligand>
</feature>
<feature type="binding site" evidence="1">
    <location>
        <position position="408"/>
    </location>
    <ligand>
        <name>acetyl-CoA</name>
        <dbReference type="ChEBI" id="CHEBI:57288"/>
    </ligand>
</feature>
<feature type="binding site" evidence="1">
    <location>
        <position position="425"/>
    </location>
    <ligand>
        <name>acetyl-CoA</name>
        <dbReference type="ChEBI" id="CHEBI:57288"/>
    </ligand>
</feature>